<proteinExistence type="inferred from homology"/>
<sequence length="58" mass="6906">MAQVTVGENEGVESALRRFKRAVSKAGIFSDLKRIRHHETPVEKYKRKAQQRRRSRRR</sequence>
<accession>Q7TUX0</accession>
<comment type="similarity">
    <text evidence="1">Belongs to the bacterial ribosomal protein bS21 family.</text>
</comment>
<dbReference type="EMBL" id="BX548175">
    <property type="protein sequence ID" value="CAE21197.1"/>
    <property type="molecule type" value="Genomic_DNA"/>
</dbReference>
<dbReference type="RefSeq" id="WP_011130394.1">
    <property type="nucleotide sequence ID" value="NC_005071.1"/>
</dbReference>
<dbReference type="SMR" id="Q7TUX0"/>
<dbReference type="KEGG" id="pmt:PMT_1022"/>
<dbReference type="eggNOG" id="COG0828">
    <property type="taxonomic scope" value="Bacteria"/>
</dbReference>
<dbReference type="HOGENOM" id="CLU_159258_3_1_3"/>
<dbReference type="OrthoDB" id="9799244at2"/>
<dbReference type="Proteomes" id="UP000001423">
    <property type="component" value="Chromosome"/>
</dbReference>
<dbReference type="GO" id="GO:1990904">
    <property type="term" value="C:ribonucleoprotein complex"/>
    <property type="evidence" value="ECO:0007669"/>
    <property type="project" value="UniProtKB-KW"/>
</dbReference>
<dbReference type="GO" id="GO:0005840">
    <property type="term" value="C:ribosome"/>
    <property type="evidence" value="ECO:0007669"/>
    <property type="project" value="UniProtKB-KW"/>
</dbReference>
<dbReference type="GO" id="GO:0003735">
    <property type="term" value="F:structural constituent of ribosome"/>
    <property type="evidence" value="ECO:0007669"/>
    <property type="project" value="InterPro"/>
</dbReference>
<dbReference type="GO" id="GO:0006412">
    <property type="term" value="P:translation"/>
    <property type="evidence" value="ECO:0007669"/>
    <property type="project" value="UniProtKB-UniRule"/>
</dbReference>
<dbReference type="Gene3D" id="1.20.5.1150">
    <property type="entry name" value="Ribosomal protein S8"/>
    <property type="match status" value="1"/>
</dbReference>
<dbReference type="HAMAP" id="MF_00358">
    <property type="entry name" value="Ribosomal_bS21"/>
    <property type="match status" value="1"/>
</dbReference>
<dbReference type="InterPro" id="IPR001911">
    <property type="entry name" value="Ribosomal_bS21"/>
</dbReference>
<dbReference type="InterPro" id="IPR018278">
    <property type="entry name" value="Ribosomal_bS21_CS"/>
</dbReference>
<dbReference type="InterPro" id="IPR038380">
    <property type="entry name" value="Ribosomal_bS21_sf"/>
</dbReference>
<dbReference type="NCBIfam" id="TIGR00030">
    <property type="entry name" value="S21p"/>
    <property type="match status" value="1"/>
</dbReference>
<dbReference type="PANTHER" id="PTHR21109">
    <property type="entry name" value="MITOCHONDRIAL 28S RIBOSOMAL PROTEIN S21"/>
    <property type="match status" value="1"/>
</dbReference>
<dbReference type="PANTHER" id="PTHR21109:SF0">
    <property type="entry name" value="SMALL RIBOSOMAL SUBUNIT PROTEIN BS21M"/>
    <property type="match status" value="1"/>
</dbReference>
<dbReference type="Pfam" id="PF01165">
    <property type="entry name" value="Ribosomal_S21"/>
    <property type="match status" value="1"/>
</dbReference>
<dbReference type="PRINTS" id="PR00976">
    <property type="entry name" value="RIBOSOMALS21"/>
</dbReference>
<dbReference type="PROSITE" id="PS01181">
    <property type="entry name" value="RIBOSOMAL_S21"/>
    <property type="match status" value="1"/>
</dbReference>
<evidence type="ECO:0000255" key="1">
    <source>
        <dbReference type="HAMAP-Rule" id="MF_00358"/>
    </source>
</evidence>
<evidence type="ECO:0000256" key="2">
    <source>
        <dbReference type="SAM" id="MobiDB-lite"/>
    </source>
</evidence>
<evidence type="ECO:0000305" key="3"/>
<name>RS21_PROMM</name>
<organism>
    <name type="scientific">Prochlorococcus marinus (strain MIT 9313)</name>
    <dbReference type="NCBI Taxonomy" id="74547"/>
    <lineage>
        <taxon>Bacteria</taxon>
        <taxon>Bacillati</taxon>
        <taxon>Cyanobacteriota</taxon>
        <taxon>Cyanophyceae</taxon>
        <taxon>Synechococcales</taxon>
        <taxon>Prochlorococcaceae</taxon>
        <taxon>Prochlorococcus</taxon>
    </lineage>
</organism>
<keyword id="KW-1185">Reference proteome</keyword>
<keyword id="KW-0687">Ribonucleoprotein</keyword>
<keyword id="KW-0689">Ribosomal protein</keyword>
<reference key="1">
    <citation type="journal article" date="2003" name="Nature">
        <title>Genome divergence in two Prochlorococcus ecotypes reflects oceanic niche differentiation.</title>
        <authorList>
            <person name="Rocap G."/>
            <person name="Larimer F.W."/>
            <person name="Lamerdin J.E."/>
            <person name="Malfatti S."/>
            <person name="Chain P."/>
            <person name="Ahlgren N.A."/>
            <person name="Arellano A."/>
            <person name="Coleman M."/>
            <person name="Hauser L."/>
            <person name="Hess W.R."/>
            <person name="Johnson Z.I."/>
            <person name="Land M.L."/>
            <person name="Lindell D."/>
            <person name="Post A.F."/>
            <person name="Regala W."/>
            <person name="Shah M."/>
            <person name="Shaw S.L."/>
            <person name="Steglich C."/>
            <person name="Sullivan M.B."/>
            <person name="Ting C.S."/>
            <person name="Tolonen A."/>
            <person name="Webb E.A."/>
            <person name="Zinser E.R."/>
            <person name="Chisholm S.W."/>
        </authorList>
    </citation>
    <scope>NUCLEOTIDE SEQUENCE [LARGE SCALE GENOMIC DNA]</scope>
    <source>
        <strain>MIT 9313</strain>
    </source>
</reference>
<protein>
    <recommendedName>
        <fullName evidence="1">Small ribosomal subunit protein bS21</fullName>
    </recommendedName>
    <alternativeName>
        <fullName evidence="3">30S ribosomal protein S21</fullName>
    </alternativeName>
</protein>
<feature type="chain" id="PRO_0000266729" description="Small ribosomal subunit protein bS21">
    <location>
        <begin position="1"/>
        <end position="58"/>
    </location>
</feature>
<feature type="region of interest" description="Disordered" evidence="2">
    <location>
        <begin position="31"/>
        <end position="58"/>
    </location>
</feature>
<feature type="compositionally biased region" description="Basic residues" evidence="2">
    <location>
        <begin position="45"/>
        <end position="58"/>
    </location>
</feature>
<gene>
    <name evidence="1" type="primary">rpsU</name>
    <name evidence="1" type="synonym">rps21</name>
    <name type="ordered locus">PMT_1022</name>
</gene>